<sequence length="84" mass="9330">MIWTAVIKGSALMTFVQGAMALVDKVFGEEILPHRIYSSGEAAQLLGMERLQVLEMVRAGTIKAKKVGDNYRILGSNLVEYMNR</sequence>
<dbReference type="EMBL" id="BX571797">
    <property type="protein sequence ID" value="CAE12042.1"/>
    <property type="status" value="ALT_INIT"/>
    <property type="molecule type" value="Genomic_DNA"/>
</dbReference>
<dbReference type="EMBL" id="AM085146">
    <property type="protein sequence ID" value="CAJ30126.1"/>
    <property type="status" value="ALT_INIT"/>
    <property type="molecule type" value="Genomic_DNA"/>
</dbReference>
<dbReference type="EMBL" id="CU459003">
    <property type="protein sequence ID" value="CAM78033.1"/>
    <property type="status" value="ALT_INIT"/>
    <property type="molecule type" value="Genomic_DNA"/>
</dbReference>
<dbReference type="EMBL" id="HG794546">
    <property type="protein sequence ID" value="CDK99584.1"/>
    <property type="molecule type" value="Genomic_DNA"/>
</dbReference>
<dbReference type="STRING" id="1430440.MGMSRv2__2369"/>
<dbReference type="KEGG" id="mgy:MGMSRv2__2369"/>
<dbReference type="HOGENOM" id="CLU_2523586_0_0_5"/>
<dbReference type="OrthoDB" id="3234977at2"/>
<dbReference type="Proteomes" id="UP000018922">
    <property type="component" value="Chromosome I"/>
</dbReference>
<dbReference type="GO" id="GO:0110143">
    <property type="term" value="C:magnetosome"/>
    <property type="evidence" value="ECO:0000314"/>
    <property type="project" value="UniProtKB"/>
</dbReference>
<dbReference type="GO" id="GO:0003677">
    <property type="term" value="F:DNA binding"/>
    <property type="evidence" value="ECO:0007669"/>
    <property type="project" value="InterPro"/>
</dbReference>
<dbReference type="InterPro" id="IPR041657">
    <property type="entry name" value="HTH_17"/>
</dbReference>
<dbReference type="InterPro" id="IPR010093">
    <property type="entry name" value="SinI_DNA-bd"/>
</dbReference>
<dbReference type="NCBIfam" id="TIGR01764">
    <property type="entry name" value="excise"/>
    <property type="match status" value="1"/>
</dbReference>
<dbReference type="NCBIfam" id="NF040990">
    <property type="entry name" value="MamR"/>
    <property type="match status" value="1"/>
</dbReference>
<dbReference type="Pfam" id="PF12728">
    <property type="entry name" value="HTH_17"/>
    <property type="match status" value="1"/>
</dbReference>
<feature type="chain" id="PRO_0000447808" description="Magnetosome protein MamR">
    <location>
        <begin position="1"/>
        <end position="84"/>
    </location>
</feature>
<gene>
    <name evidence="6" type="primary">mamR</name>
    <name type="ordered locus">MGMSRv2__2369</name>
    <name type="ORF">mgI497</name>
    <name type="ORF">MGR_4101</name>
</gene>
<comment type="function">
    <text evidence="5 9">May play a role in controlling magnetite number and size (Probable). Coexpression of mamLQRBIEMO in a deletion of the 17 gene mamAB operon restores magnetosome vesicle formation but not magnetite biosynthesis (PubMed:27286560).</text>
</comment>
<comment type="subcellular location">
    <subcellularLocation>
        <location evidence="2">Magnetosome</location>
    </subcellularLocation>
</comment>
<comment type="induction">
    <text evidence="8">Part of the probable 17 gene mamAB operon.</text>
</comment>
<comment type="disruption phenotype">
    <text evidence="1 4">Normal magnetic response, slightly smaller, sometime scattered magnetosomes (PubMed:24816605). Deletion of approximately 80 kb of DNA, including this operon, leads to cells that are non-magnetic, lack internal membrane systems, grow poorly, have reduced mobility and take-up and accumulate iron poorly (PubMed:13129949).</text>
</comment>
<comment type="miscellaneous">
    <text evidence="8">This bacteria makes up to 60 cubo-octahedral magnetosomes of about 45 nm in diameter which contain membrane-bound crystals of magnetite (Fe(3)O(4)).</text>
</comment>
<comment type="miscellaneous">
    <text evidence="3">Expression of just the minimal mamAB gene cluster (MGMSRv2__2365 to MGMSRv2__2381), including this gene, is sufficient to form a minimal magnetosome chain with small magnetite particles.</text>
</comment>
<comment type="similarity">
    <text evidence="7">Belongs to the magnetosome MamR family.</text>
</comment>
<comment type="sequence caution" evidence="9">
    <conflict type="erroneous initiation">
        <sequence resource="EMBL-CDS" id="CAE12042"/>
    </conflict>
    <text>Truncated N-terminus.</text>
</comment>
<comment type="sequence caution" evidence="9">
    <conflict type="erroneous initiation">
        <sequence resource="EMBL-CDS" id="CAJ30126"/>
    </conflict>
    <text>Truncated N-terminus.</text>
</comment>
<comment type="sequence caution" evidence="9">
    <conflict type="erroneous initiation">
        <sequence resource="EMBL-CDS" id="CAM78033"/>
    </conflict>
    <text>Truncated N-terminus.</text>
</comment>
<protein>
    <recommendedName>
        <fullName evidence="7">Magnetosome protein MamR</fullName>
    </recommendedName>
</protein>
<proteinExistence type="evidence at protein level"/>
<organism>
    <name type="scientific">Magnetospirillum gryphiswaldense (strain DSM 6361 / JCM 21280 / NBRC 15271 / MSR-1)</name>
    <dbReference type="NCBI Taxonomy" id="431944"/>
    <lineage>
        <taxon>Bacteria</taxon>
        <taxon>Pseudomonadati</taxon>
        <taxon>Pseudomonadota</taxon>
        <taxon>Alphaproteobacteria</taxon>
        <taxon>Rhodospirillales</taxon>
        <taxon>Rhodospirillaceae</taxon>
        <taxon>Magnetospirillum</taxon>
    </lineage>
</organism>
<evidence type="ECO:0000269" key="1">
    <source>
    </source>
</evidence>
<evidence type="ECO:0000269" key="2">
    <source>
    </source>
</evidence>
<evidence type="ECO:0000269" key="3">
    <source>
    </source>
</evidence>
<evidence type="ECO:0000269" key="4">
    <source>
    </source>
</evidence>
<evidence type="ECO:0000269" key="5">
    <source>
    </source>
</evidence>
<evidence type="ECO:0000303" key="6">
    <source>
    </source>
</evidence>
<evidence type="ECO:0000305" key="7"/>
<evidence type="ECO:0000305" key="8">
    <source>
    </source>
</evidence>
<evidence type="ECO:0000305" key="9">
    <source>
    </source>
</evidence>
<keyword id="KW-0091">Biomineralization</keyword>
<keyword id="KW-1281">Magnetosome</keyword>
<keyword id="KW-1185">Reference proteome</keyword>
<accession>Q6NE51</accession>
<accession>V6F2A7</accession>
<name>MAMR_MAGGM</name>
<reference key="1">
    <citation type="journal article" date="2003" name="J. Bacteriol.">
        <title>Characterization of a spontaneous nonmagnetic mutant of Magnetospirillum gryphiswaldense reveals a large deletion comprising a putative magnetosome island.</title>
        <authorList>
            <person name="Schuebbe S."/>
            <person name="Kube M."/>
            <person name="Scheffel A."/>
            <person name="Wawer C."/>
            <person name="Heyen U."/>
            <person name="Meyerdierks A."/>
            <person name="Madkour M.H."/>
            <person name="Mayer F."/>
            <person name="Reinhardt R."/>
            <person name="Schueler D."/>
        </authorList>
    </citation>
    <scope>NUCLEOTIDE SEQUENCE [GENOMIC DNA]</scope>
    <scope>PROBABLE OPERON</scope>
    <scope>DISRUPTION PHENOTYPE</scope>
    <source>
        <strain>DSM 6361 / JCM 21280 / NBRC 15271 / MSR-1</strain>
    </source>
</reference>
<reference key="2">
    <citation type="journal article" date="2005" name="J. Bacteriol.">
        <title>A hypervariable 130-kilobase genomic region of Magnetospirillum gryphiswaldense comprises a magnetosome island which undergoes frequent rearrangements during stationary growth.</title>
        <authorList>
            <person name="Ullrich S."/>
            <person name="Kube M."/>
            <person name="Schuebbe S."/>
            <person name="Reinhardt R."/>
            <person name="Schueler D."/>
        </authorList>
    </citation>
    <scope>NUCLEOTIDE SEQUENCE [GENOMIC DNA]</scope>
    <source>
        <strain>DSM 6361 / JCM 21280 / NBRC 15271 / MSR-1</strain>
    </source>
</reference>
<reference key="3">
    <citation type="journal article" date="2007" name="J. Bacteriol.">
        <title>Comparative genome analysis of four magnetotactic bacteria reveals a complex set of group-specific genes implicated in magnetosome biomineralization and function.</title>
        <authorList>
            <person name="Richter M."/>
            <person name="Kube M."/>
            <person name="Bazylinski D.A."/>
            <person name="Lombardot T."/>
            <person name="Gloeckner F.O."/>
            <person name="Reinhardt R."/>
            <person name="Schueler D."/>
        </authorList>
    </citation>
    <scope>NUCLEOTIDE SEQUENCE [LARGE SCALE GENOMIC DNA]</scope>
    <source>
        <strain>DSM 6361 / JCM 21280 / NBRC 15271 / MSR-1</strain>
    </source>
</reference>
<reference key="4">
    <citation type="journal article" date="2014" name="Genome Announc.">
        <title>Complete genome sequence of Magnetospirillum gryphiswaldense MSR-1.</title>
        <authorList>
            <person name="Wang X."/>
            <person name="Wang Q."/>
            <person name="Zhang W."/>
            <person name="Wang Y."/>
            <person name="Li L."/>
            <person name="Wen T."/>
            <person name="Zhang T."/>
            <person name="Zhang Y."/>
            <person name="Xu J."/>
            <person name="Hu J."/>
            <person name="Li S."/>
            <person name="Liu L."/>
            <person name="Liu J."/>
            <person name="Jiang W."/>
            <person name="Tian J."/>
            <person name="Li Y."/>
            <person name="Schuler D."/>
            <person name="Wang L."/>
            <person name="Li J."/>
        </authorList>
    </citation>
    <scope>NUCLEOTIDE SEQUENCE [LARGE SCALE GENOMIC DNA]</scope>
    <source>
        <strain>DSM 6361 / JCM 21280 / NBRC 15271 / MSR-1</strain>
    </source>
</reference>
<reference key="5">
    <citation type="journal article" date="2004" name="Appl. Environ. Microbiol.">
        <title>Biochemical and proteomic analysis of the magnetosome membrane in Magnetospirillum gryphiswaldense.</title>
        <authorList>
            <person name="Gruenberg K."/>
            <person name="Mueller E.C."/>
            <person name="Otto A."/>
            <person name="Reszka R."/>
            <person name="Linder D."/>
            <person name="Kube M."/>
            <person name="Reinhardt R."/>
            <person name="Schueler D."/>
        </authorList>
    </citation>
    <scope>SUBCELLULAR LOCATION</scope>
    <scope>IDENTIFICATION BY MASS SPECTROMETRY</scope>
    <source>
        <strain>DSM 6361 / JCM 21280 / NBRC 15271 / MSR-1</strain>
    </source>
</reference>
<reference key="6">
    <citation type="journal article" date="2011" name="PLoS ONE">
        <title>Functional analysis of the magnetosome island in Magnetospirillum gryphiswaldense: the mamAB operon is sufficient for magnetite biomineralization.</title>
        <authorList>
            <person name="Lohsse A."/>
            <person name="Ullrich S."/>
            <person name="Katzmann E."/>
            <person name="Borg S."/>
            <person name="Wanner G."/>
            <person name="Richter M."/>
            <person name="Voigt B."/>
            <person name="Schweder T."/>
            <person name="Schueler D."/>
        </authorList>
    </citation>
    <scope>MINIMAL MAGNETOSOME ISLAND</scope>
    <source>
        <strain>DSM 6361 / JCM 21280 / NBRC 15271 / MSR-1</strain>
    </source>
</reference>
<reference key="7">
    <citation type="journal article" date="2014" name="J. Bacteriol.">
        <title>Genetic dissection of the mamAB and mms6 operons reveals a gene set essential for magnetosome biogenesis in Magnetospirillum gryphiswaldense.</title>
        <authorList>
            <person name="Lohsse A."/>
            <person name="Borg S."/>
            <person name="Raschdorf O."/>
            <person name="Kolinko I."/>
            <person name="Tompa E."/>
            <person name="Posfai M."/>
            <person name="Faivre D."/>
            <person name="Baumgartner J."/>
            <person name="Schueler D."/>
        </authorList>
    </citation>
    <scope>SEQUENCE REVISION TO N-TERMINUS</scope>
    <scope>FUNCTION</scope>
    <scope>DISRUPTION PHENOTYPE</scope>
    <source>
        <strain>DSM 6361 / JCM 21280 / NBRC 15271 / MSR-1</strain>
    </source>
</reference>
<reference key="8">
    <citation type="journal article" date="2016" name="PLoS Genet.">
        <title>Genetic and Ultrastructural Analysis Reveals the Key Players and Initial Steps of Bacterial Magnetosome Membrane Biogenesis.</title>
        <authorList>
            <person name="Raschdorf O."/>
            <person name="Forstner Y."/>
            <person name="Kolinko I."/>
            <person name="Uebe R."/>
            <person name="Plitzko J.M."/>
            <person name="Schueler D."/>
        </authorList>
    </citation>
    <scope>FUNCTION</scope>
    <scope>MINIMAL VESICLE FORMATION GENES</scope>
    <source>
        <strain>DSM 6361 / JCM 21280 / NBRC 15271 / MSR-1</strain>
    </source>
</reference>